<keyword id="KW-0030">Aminoacyl-tRNA synthetase</keyword>
<keyword id="KW-0067">ATP-binding</keyword>
<keyword id="KW-0963">Cytoplasm</keyword>
<keyword id="KW-0436">Ligase</keyword>
<keyword id="KW-0547">Nucleotide-binding</keyword>
<keyword id="KW-0648">Protein biosynthesis</keyword>
<keyword id="KW-1185">Reference proteome</keyword>
<protein>
    <recommendedName>
        <fullName evidence="1">Glutamate--tRNA ligase</fullName>
        <ecNumber evidence="1">6.1.1.17</ecNumber>
    </recommendedName>
    <alternativeName>
        <fullName evidence="1">Glutamyl-tRNA synthetase</fullName>
        <shortName evidence="1">GluRS</shortName>
    </alternativeName>
</protein>
<feature type="chain" id="PRO_0000119589" description="Glutamate--tRNA ligase">
    <location>
        <begin position="1"/>
        <end position="491"/>
    </location>
</feature>
<feature type="short sequence motif" description="'HIGH' region" evidence="1">
    <location>
        <begin position="9"/>
        <end position="19"/>
    </location>
</feature>
<feature type="short sequence motif" description="'KMSKS' region" evidence="1">
    <location>
        <begin position="253"/>
        <end position="257"/>
    </location>
</feature>
<feature type="binding site" evidence="1">
    <location>
        <position position="256"/>
    </location>
    <ligand>
        <name>ATP</name>
        <dbReference type="ChEBI" id="CHEBI:30616"/>
    </ligand>
</feature>
<gene>
    <name evidence="1" type="primary">gltX</name>
    <name type="ordered locus">Lxx13080</name>
</gene>
<dbReference type="EC" id="6.1.1.17" evidence="1"/>
<dbReference type="EMBL" id="AE016822">
    <property type="protein sequence ID" value="AAT89145.1"/>
    <property type="molecule type" value="Genomic_DNA"/>
</dbReference>
<dbReference type="SMR" id="Q6AEQ1"/>
<dbReference type="STRING" id="281090.Lxx13080"/>
<dbReference type="KEGG" id="lxx:Lxx13080"/>
<dbReference type="eggNOG" id="COG0008">
    <property type="taxonomic scope" value="Bacteria"/>
</dbReference>
<dbReference type="HOGENOM" id="CLU_015768_6_1_11"/>
<dbReference type="Proteomes" id="UP000001306">
    <property type="component" value="Chromosome"/>
</dbReference>
<dbReference type="GO" id="GO:0005829">
    <property type="term" value="C:cytosol"/>
    <property type="evidence" value="ECO:0007669"/>
    <property type="project" value="TreeGrafter"/>
</dbReference>
<dbReference type="GO" id="GO:0005524">
    <property type="term" value="F:ATP binding"/>
    <property type="evidence" value="ECO:0007669"/>
    <property type="project" value="UniProtKB-UniRule"/>
</dbReference>
<dbReference type="GO" id="GO:0004818">
    <property type="term" value="F:glutamate-tRNA ligase activity"/>
    <property type="evidence" value="ECO:0007669"/>
    <property type="project" value="UniProtKB-UniRule"/>
</dbReference>
<dbReference type="GO" id="GO:0000049">
    <property type="term" value="F:tRNA binding"/>
    <property type="evidence" value="ECO:0007669"/>
    <property type="project" value="InterPro"/>
</dbReference>
<dbReference type="GO" id="GO:0008270">
    <property type="term" value="F:zinc ion binding"/>
    <property type="evidence" value="ECO:0007669"/>
    <property type="project" value="InterPro"/>
</dbReference>
<dbReference type="GO" id="GO:0006424">
    <property type="term" value="P:glutamyl-tRNA aminoacylation"/>
    <property type="evidence" value="ECO:0007669"/>
    <property type="project" value="UniProtKB-UniRule"/>
</dbReference>
<dbReference type="CDD" id="cd00808">
    <property type="entry name" value="GluRS_core"/>
    <property type="match status" value="1"/>
</dbReference>
<dbReference type="FunFam" id="3.40.50.620:FF:000149">
    <property type="entry name" value="Glutamate--tRNA ligase"/>
    <property type="match status" value="1"/>
</dbReference>
<dbReference type="Gene3D" id="1.10.10.350">
    <property type="match status" value="1"/>
</dbReference>
<dbReference type="Gene3D" id="1.10.8.70">
    <property type="entry name" value="Glutamate-tRNA synthetase, class I, anticodon-binding domain 1"/>
    <property type="match status" value="1"/>
</dbReference>
<dbReference type="Gene3D" id="1.10.1160.10">
    <property type="entry name" value="Glutamyl-trna Synthetase, Domain 2"/>
    <property type="match status" value="1"/>
</dbReference>
<dbReference type="Gene3D" id="3.90.800.10">
    <property type="entry name" value="Glutamyl-tRNA Synthetase, Domain 3"/>
    <property type="match status" value="1"/>
</dbReference>
<dbReference type="Gene3D" id="3.40.50.620">
    <property type="entry name" value="HUPs"/>
    <property type="match status" value="1"/>
</dbReference>
<dbReference type="HAMAP" id="MF_00022">
    <property type="entry name" value="Glu_tRNA_synth_type1"/>
    <property type="match status" value="1"/>
</dbReference>
<dbReference type="InterPro" id="IPR045462">
    <property type="entry name" value="aa-tRNA-synth_I_cd-bd"/>
</dbReference>
<dbReference type="InterPro" id="IPR020751">
    <property type="entry name" value="aa-tRNA-synth_I_codon-bd_sub2"/>
</dbReference>
<dbReference type="InterPro" id="IPR008925">
    <property type="entry name" value="aa_tRNA-synth_I_cd-bd_sf"/>
</dbReference>
<dbReference type="InterPro" id="IPR004527">
    <property type="entry name" value="Glu-tRNA-ligase_bac/mito"/>
</dbReference>
<dbReference type="InterPro" id="IPR020752">
    <property type="entry name" value="Glu-tRNA-synth_I_codon-bd_sub1"/>
</dbReference>
<dbReference type="InterPro" id="IPR000924">
    <property type="entry name" value="Glu/Gln-tRNA-synth"/>
</dbReference>
<dbReference type="InterPro" id="IPR020058">
    <property type="entry name" value="Glu/Gln-tRNA-synth_Ib_cat-dom"/>
</dbReference>
<dbReference type="InterPro" id="IPR020061">
    <property type="entry name" value="Glu_tRNA_lig_a-bdl"/>
</dbReference>
<dbReference type="InterPro" id="IPR049940">
    <property type="entry name" value="GluQ/Sye"/>
</dbReference>
<dbReference type="InterPro" id="IPR033910">
    <property type="entry name" value="GluRS_core"/>
</dbReference>
<dbReference type="InterPro" id="IPR014729">
    <property type="entry name" value="Rossmann-like_a/b/a_fold"/>
</dbReference>
<dbReference type="NCBIfam" id="TIGR00464">
    <property type="entry name" value="gltX_bact"/>
    <property type="match status" value="1"/>
</dbReference>
<dbReference type="PANTHER" id="PTHR43311">
    <property type="entry name" value="GLUTAMATE--TRNA LIGASE"/>
    <property type="match status" value="1"/>
</dbReference>
<dbReference type="PANTHER" id="PTHR43311:SF2">
    <property type="entry name" value="GLUTAMATE--TRNA LIGASE, MITOCHONDRIAL-RELATED"/>
    <property type="match status" value="1"/>
</dbReference>
<dbReference type="Pfam" id="PF19269">
    <property type="entry name" value="Anticodon_2"/>
    <property type="match status" value="1"/>
</dbReference>
<dbReference type="Pfam" id="PF00749">
    <property type="entry name" value="tRNA-synt_1c"/>
    <property type="match status" value="1"/>
</dbReference>
<dbReference type="PRINTS" id="PR00987">
    <property type="entry name" value="TRNASYNTHGLU"/>
</dbReference>
<dbReference type="SUPFAM" id="SSF48163">
    <property type="entry name" value="An anticodon-binding domain of class I aminoacyl-tRNA synthetases"/>
    <property type="match status" value="1"/>
</dbReference>
<dbReference type="SUPFAM" id="SSF52374">
    <property type="entry name" value="Nucleotidylyl transferase"/>
    <property type="match status" value="1"/>
</dbReference>
<accession>Q6AEQ1</accession>
<name>SYE_LEIXX</name>
<evidence type="ECO:0000255" key="1">
    <source>
        <dbReference type="HAMAP-Rule" id="MF_00022"/>
    </source>
</evidence>
<sequence>MDVRVRFCPSPTGTPHVGMIRTALFNWAYARHTGGKFLFRIEDTDAARDSEESYGQIIDALRWLRLDWDEGVEVGGPHAPYRQSQRSSIYRELIEKLTASGHIYESFATGEEVEAHNIALGRDPKLGYDNFERDLTDAQKAAHRAEGREPALRLRVPDEDLSFDDLVRGEITFSAGSFSDFVVVRPNRQPLYTFVNPVDDALMGVTHVLRGEDLLSSTPRQIALYHALIETGVTTFVPRFGHLPYVMGEGNKKLSKRDPESNLFHHRDRGFIPEGLVNYLTLLGWSLSHDRDVFSIDEMVAAFDVGDVNPNPARFDQKKAESINGDHIRLLEVGDFAERTIPYLVAAGVLTEPITETQRAVLAEAAPLVQERVQLLGETPGMLGFLFAEAASVTIEDDARASLPANAGEALAASIGALELVPEAEWAHEAIEATLRDALVETLGFKPRIAFGPLRVALSGRRVSPPLFESMAILGKAETLARLVRLSAALG</sequence>
<proteinExistence type="inferred from homology"/>
<organism>
    <name type="scientific">Leifsonia xyli subsp. xyli (strain CTCB07)</name>
    <dbReference type="NCBI Taxonomy" id="281090"/>
    <lineage>
        <taxon>Bacteria</taxon>
        <taxon>Bacillati</taxon>
        <taxon>Actinomycetota</taxon>
        <taxon>Actinomycetes</taxon>
        <taxon>Micrococcales</taxon>
        <taxon>Microbacteriaceae</taxon>
        <taxon>Leifsonia</taxon>
    </lineage>
</organism>
<reference key="1">
    <citation type="journal article" date="2004" name="Mol. Plant Microbe Interact.">
        <title>The genome sequence of the Gram-positive sugarcane pathogen Leifsonia xyli subsp. xyli.</title>
        <authorList>
            <person name="Monteiro-Vitorello C.B."/>
            <person name="Camargo L.E.A."/>
            <person name="Van Sluys M.A."/>
            <person name="Kitajima J.P."/>
            <person name="Truffi D."/>
            <person name="do Amaral A.M."/>
            <person name="Harakava R."/>
            <person name="de Oliveira J.C.F."/>
            <person name="Wood D."/>
            <person name="de Oliveira M.C."/>
            <person name="Miyaki C.Y."/>
            <person name="Takita M.A."/>
            <person name="da Silva A.C.R."/>
            <person name="Furlan L.R."/>
            <person name="Carraro D.M."/>
            <person name="Camarotte G."/>
            <person name="Almeida N.F. Jr."/>
            <person name="Carrer H."/>
            <person name="Coutinho L.L."/>
            <person name="El-Dorry H.A."/>
            <person name="Ferro M.I.T."/>
            <person name="Gagliardi P.R."/>
            <person name="Giglioti E."/>
            <person name="Goldman M.H.S."/>
            <person name="Goldman G.H."/>
            <person name="Kimura E.T."/>
            <person name="Ferro E.S."/>
            <person name="Kuramae E.E."/>
            <person name="Lemos E.G.M."/>
            <person name="Lemos M.V.F."/>
            <person name="Mauro S.M.Z."/>
            <person name="Machado M.A."/>
            <person name="Marino C.L."/>
            <person name="Menck C.F."/>
            <person name="Nunes L.R."/>
            <person name="Oliveira R.C."/>
            <person name="Pereira G.G."/>
            <person name="Siqueira W."/>
            <person name="de Souza A.A."/>
            <person name="Tsai S.M."/>
            <person name="Zanca A.S."/>
            <person name="Simpson A.J.G."/>
            <person name="Brumbley S.M."/>
            <person name="Setubal J.C."/>
        </authorList>
    </citation>
    <scope>NUCLEOTIDE SEQUENCE [LARGE SCALE GENOMIC DNA]</scope>
    <source>
        <strain>CTCB07</strain>
    </source>
</reference>
<comment type="function">
    <text evidence="1">Catalyzes the attachment of glutamate to tRNA(Glu) in a two-step reaction: glutamate is first activated by ATP to form Glu-AMP and then transferred to the acceptor end of tRNA(Glu).</text>
</comment>
<comment type="catalytic activity">
    <reaction evidence="1">
        <text>tRNA(Glu) + L-glutamate + ATP = L-glutamyl-tRNA(Glu) + AMP + diphosphate</text>
        <dbReference type="Rhea" id="RHEA:23540"/>
        <dbReference type="Rhea" id="RHEA-COMP:9663"/>
        <dbReference type="Rhea" id="RHEA-COMP:9680"/>
        <dbReference type="ChEBI" id="CHEBI:29985"/>
        <dbReference type="ChEBI" id="CHEBI:30616"/>
        <dbReference type="ChEBI" id="CHEBI:33019"/>
        <dbReference type="ChEBI" id="CHEBI:78442"/>
        <dbReference type="ChEBI" id="CHEBI:78520"/>
        <dbReference type="ChEBI" id="CHEBI:456215"/>
        <dbReference type="EC" id="6.1.1.17"/>
    </reaction>
</comment>
<comment type="subunit">
    <text evidence="1">Monomer.</text>
</comment>
<comment type="subcellular location">
    <subcellularLocation>
        <location evidence="1">Cytoplasm</location>
    </subcellularLocation>
</comment>
<comment type="similarity">
    <text evidence="1">Belongs to the class-I aminoacyl-tRNA synthetase family. Glutamate--tRNA ligase type 1 subfamily.</text>
</comment>